<evidence type="ECO:0000250" key="1"/>
<evidence type="ECO:0000255" key="2"/>
<evidence type="ECO:0000256" key="3">
    <source>
        <dbReference type="SAM" id="MobiDB-lite"/>
    </source>
</evidence>
<evidence type="ECO:0000305" key="4"/>
<dbReference type="EMBL" id="BT092301">
    <property type="protein sequence ID" value="ACU16550.1"/>
    <property type="molecule type" value="mRNA"/>
</dbReference>
<dbReference type="RefSeq" id="NP_001236338.1">
    <property type="nucleotide sequence ID" value="NM_001249409.2"/>
</dbReference>
<dbReference type="SMR" id="C6T4E0"/>
<dbReference type="STRING" id="3847.C6T4E0"/>
<dbReference type="PaxDb" id="3847-GLYMA12G31180.1"/>
<dbReference type="EnsemblPlants" id="KRH26660">
    <property type="protein sequence ID" value="KRH26660"/>
    <property type="gene ID" value="GLYMA_12G186500"/>
</dbReference>
<dbReference type="GeneID" id="100527457"/>
<dbReference type="Gramene" id="KRH26660">
    <property type="protein sequence ID" value="KRH26660"/>
    <property type="gene ID" value="GLYMA_12G186500"/>
</dbReference>
<dbReference type="KEGG" id="gmx:100527457"/>
<dbReference type="eggNOG" id="ENOG502RXQU">
    <property type="taxonomic scope" value="Eukaryota"/>
</dbReference>
<dbReference type="HOGENOM" id="CLU_066104_3_1_1"/>
<dbReference type="InParanoid" id="C6T4E0"/>
<dbReference type="OMA" id="FHAQYND"/>
<dbReference type="OrthoDB" id="753675at2759"/>
<dbReference type="Proteomes" id="UP000008827">
    <property type="component" value="Chromosome 12"/>
</dbReference>
<dbReference type="GO" id="GO:0048226">
    <property type="term" value="C:Casparian strip"/>
    <property type="evidence" value="ECO:0000318"/>
    <property type="project" value="GO_Central"/>
</dbReference>
<dbReference type="GO" id="GO:0005886">
    <property type="term" value="C:plasma membrane"/>
    <property type="evidence" value="ECO:0000318"/>
    <property type="project" value="GO_Central"/>
</dbReference>
<dbReference type="GO" id="GO:0042545">
    <property type="term" value="P:cell wall modification"/>
    <property type="evidence" value="ECO:0000318"/>
    <property type="project" value="GO_Central"/>
</dbReference>
<dbReference type="GO" id="GO:0007043">
    <property type="term" value="P:cell-cell junction assembly"/>
    <property type="evidence" value="ECO:0000318"/>
    <property type="project" value="GO_Central"/>
</dbReference>
<dbReference type="InterPro" id="IPR006459">
    <property type="entry name" value="CASP/CASPL"/>
</dbReference>
<dbReference type="InterPro" id="IPR006702">
    <property type="entry name" value="CASP_dom"/>
</dbReference>
<dbReference type="InterPro" id="IPR044173">
    <property type="entry name" value="CASPL"/>
</dbReference>
<dbReference type="NCBIfam" id="TIGR01569">
    <property type="entry name" value="A_tha_TIGR01569"/>
    <property type="match status" value="1"/>
</dbReference>
<dbReference type="PANTHER" id="PTHR36488:SF11">
    <property type="entry name" value="CASP-LIKE PROTEIN"/>
    <property type="match status" value="1"/>
</dbReference>
<dbReference type="PANTHER" id="PTHR36488">
    <property type="entry name" value="CASP-LIKE PROTEIN 1U1"/>
    <property type="match status" value="1"/>
</dbReference>
<dbReference type="Pfam" id="PF04535">
    <property type="entry name" value="CASP_dom"/>
    <property type="match status" value="1"/>
</dbReference>
<sequence>MDSGKEGEAPAATSSPESRRTRSNGKVKAFADAAPPSATVVSTKATPLPRGGWKKGVAILDFIIRLGAIGSALGAAAIMGNSEQILPFFTQFFQFHAQWDDFPMFQFFVFANGAAGGFLILSLPFSIVCIVRPYTVGPRLLLVILDILMMALVMAAASSAAAVVYLAHNGSQDANWIAICQQFTDFCQVTSEAVVASFVAAFLLICLIVVSSVALKRG</sequence>
<protein>
    <recommendedName>
        <fullName>Casparian strip membrane protein 5</fullName>
        <shortName>GmCASP5</shortName>
    </recommendedName>
</protein>
<proteinExistence type="evidence at transcript level"/>
<organism>
    <name type="scientific">Glycine max</name>
    <name type="common">Soybean</name>
    <name type="synonym">Glycine hispida</name>
    <dbReference type="NCBI Taxonomy" id="3847"/>
    <lineage>
        <taxon>Eukaryota</taxon>
        <taxon>Viridiplantae</taxon>
        <taxon>Streptophyta</taxon>
        <taxon>Embryophyta</taxon>
        <taxon>Tracheophyta</taxon>
        <taxon>Spermatophyta</taxon>
        <taxon>Magnoliopsida</taxon>
        <taxon>eudicotyledons</taxon>
        <taxon>Gunneridae</taxon>
        <taxon>Pentapetalae</taxon>
        <taxon>rosids</taxon>
        <taxon>fabids</taxon>
        <taxon>Fabales</taxon>
        <taxon>Fabaceae</taxon>
        <taxon>Papilionoideae</taxon>
        <taxon>50 kb inversion clade</taxon>
        <taxon>NPAAA clade</taxon>
        <taxon>indigoferoid/millettioid clade</taxon>
        <taxon>Phaseoleae</taxon>
        <taxon>Glycine</taxon>
        <taxon>Glycine subgen. Soja</taxon>
    </lineage>
</organism>
<reference key="1">
    <citation type="submission" date="2009-08" db="EMBL/GenBank/DDBJ databases">
        <authorList>
            <person name="Cheung F."/>
            <person name="Xiao Y."/>
            <person name="Chan A."/>
            <person name="Moskal W."/>
            <person name="Town C.D."/>
        </authorList>
    </citation>
    <scope>NUCLEOTIDE SEQUENCE [LARGE SCALE MRNA]</scope>
</reference>
<reference key="2">
    <citation type="journal article" date="2014" name="Plant Physiol.">
        <title>Functional and evolutionary analysis of the CASPARIAN STRIP MEMBRANE DOMAIN PROTEIN family.</title>
        <authorList>
            <person name="Roppolo D."/>
            <person name="Boeckmann B."/>
            <person name="Pfister A."/>
            <person name="Boutet E."/>
            <person name="Rubio M.C."/>
            <person name="Denervaud-Tendon V."/>
            <person name="Vermeer J.E."/>
            <person name="Gheyselinck J."/>
            <person name="Xenarios I."/>
            <person name="Geldner N."/>
        </authorList>
    </citation>
    <scope>GENE FAMILY</scope>
    <scope>NOMENCLATURE</scope>
</reference>
<feature type="chain" id="PRO_0000391533" description="Casparian strip membrane protein 5">
    <location>
        <begin position="1"/>
        <end position="218"/>
    </location>
</feature>
<feature type="topological domain" description="Cytoplasmic" evidence="2">
    <location>
        <begin position="1"/>
        <end position="58"/>
    </location>
</feature>
<feature type="transmembrane region" description="Helical" evidence="2">
    <location>
        <begin position="59"/>
        <end position="79"/>
    </location>
</feature>
<feature type="topological domain" description="Extracellular" evidence="2">
    <location>
        <begin position="80"/>
        <end position="106"/>
    </location>
</feature>
<feature type="transmembrane region" description="Helical" evidence="2">
    <location>
        <begin position="107"/>
        <end position="127"/>
    </location>
</feature>
<feature type="topological domain" description="Cytoplasmic" evidence="2">
    <location>
        <begin position="128"/>
        <end position="139"/>
    </location>
</feature>
<feature type="transmembrane region" description="Helical" evidence="2">
    <location>
        <begin position="140"/>
        <end position="160"/>
    </location>
</feature>
<feature type="topological domain" description="Extracellular" evidence="2">
    <location>
        <begin position="161"/>
        <end position="192"/>
    </location>
</feature>
<feature type="transmembrane region" description="Helical" evidence="2">
    <location>
        <begin position="193"/>
        <end position="213"/>
    </location>
</feature>
<feature type="topological domain" description="Cytoplasmic" evidence="2">
    <location>
        <begin position="214"/>
        <end position="218"/>
    </location>
</feature>
<feature type="region of interest" description="Disordered" evidence="3">
    <location>
        <begin position="1"/>
        <end position="26"/>
    </location>
</feature>
<feature type="glycosylation site" description="N-linked (GlcNAc...) asparagine" evidence="2">
    <location>
        <position position="169"/>
    </location>
</feature>
<accession>C6T4E0</accession>
<name>CASP5_SOYBN</name>
<keyword id="KW-1003">Cell membrane</keyword>
<keyword id="KW-0961">Cell wall biogenesis/degradation</keyword>
<keyword id="KW-0325">Glycoprotein</keyword>
<keyword id="KW-0472">Membrane</keyword>
<keyword id="KW-1185">Reference proteome</keyword>
<keyword id="KW-0812">Transmembrane</keyword>
<keyword id="KW-1133">Transmembrane helix</keyword>
<comment type="function">
    <text evidence="1">Regulates membrane-cell wall junctions and localized cell wall deposition. Required for establishment of the Casparian strip membrane domain (CSD) and the subsequent formation of Casparian strips, a cell wall modification of the root endodermis that determines an apoplastic barrier between the intraorganismal apoplasm and the extraorganismal apoplasm and prevents lateral diffusion (By similarity).</text>
</comment>
<comment type="subunit">
    <text evidence="1">Homodimer and heterodimers.</text>
</comment>
<comment type="subcellular location">
    <subcellularLocation>
        <location evidence="1">Cell membrane</location>
        <topology evidence="1">Multi-pass membrane protein</topology>
    </subcellularLocation>
    <text evidence="1">Very restricted localization following a belt shape within the plasma membrane which coincides with the position of the Casparian strip membrane domain in the root endodermis.</text>
</comment>
<comment type="similarity">
    <text evidence="4">Belongs to the Casparian strip membrane proteins (CASP) family.</text>
</comment>